<keyword id="KW-0002">3D-structure</keyword>
<keyword id="KW-0003">3Fe-4S</keyword>
<keyword id="KW-0004">4Fe-4S</keyword>
<keyword id="KW-0903">Direct protein sequencing</keyword>
<keyword id="KW-0238">DNA-binding</keyword>
<keyword id="KW-0249">Electron transport</keyword>
<keyword id="KW-0408">Iron</keyword>
<keyword id="KW-0411">Iron-sulfur</keyword>
<keyword id="KW-0479">Metal-binding</keyword>
<keyword id="KW-0677">Repeat</keyword>
<keyword id="KW-0813">Transport</keyword>
<reference key="1">
    <citation type="journal article" date="1988" name="J. Biol. Chem.">
        <title>Azotobacter vinelandii ferredoxin I: cloning, sequencing, and mutant analysis.</title>
        <authorList>
            <person name="Morgan T.V."/>
            <person name="Lundell D.J."/>
            <person name="Burgess B.K."/>
        </authorList>
    </citation>
    <scope>NUCLEOTIDE SEQUENCE [GENOMIC DNA]</scope>
</reference>
<reference key="2">
    <citation type="journal article" date="1993" name="J. Bacteriol.">
        <title>Azotobacter vinelandii mutS: nucleotide sequence and mutant analysis.</title>
        <authorList>
            <person name="Le O."/>
            <person name="Shen B."/>
            <person name="Iismaa S.E."/>
            <person name="Burgess B.K."/>
        </authorList>
    </citation>
    <scope>NUCLEOTIDE SEQUENCE [GENOMIC DNA]</scope>
    <source>
        <strain>ATCC 13705 / OP1 / DSM 366 / NCIMB 11614 / LMG 3878 / UW</strain>
    </source>
</reference>
<reference key="3">
    <citation type="journal article" date="1983" name="J. Biol. Chem.">
        <title>Structure of Azotobacter vinelandii 7Fe ferredoxin. Amino acid sequence and electron density maps of residues.</title>
        <authorList>
            <person name="Howard J.B."/>
            <person name="Lorsbach T.W."/>
            <person name="Ghosh D."/>
            <person name="Melis K."/>
            <person name="Stout C.D."/>
        </authorList>
    </citation>
    <scope>PROTEIN SEQUENCE OF 2-107</scope>
    <scope>X-RAY CRYSTALLOGRAPHY (2 ANGSTROMS)</scope>
</reference>
<reference key="4">
    <citation type="journal article" date="1982" name="J. Mol. Biol.">
        <title>Iron-sulfur clusters and protein structure of Azotobacter ferredoxin at 2.0-A resolution.</title>
        <authorList>
            <person name="Ghosh D."/>
            <person name="O'Donnell S."/>
            <person name="Furey W.F. Jr."/>
            <person name="Robbins A.H."/>
            <person name="Stout C.D."/>
        </authorList>
    </citation>
    <scope>X-RAY CRYSTALLOGRAPHY (2 ANGSTROMS)</scope>
</reference>
<reference key="5">
    <citation type="journal article" date="1988" name="Proc. Natl. Acad. Sci. U.S.A.">
        <title>Structure of ferredoxin I from Azotobacter vinelandii.</title>
        <authorList>
            <person name="Stout G.H."/>
            <person name="Turley S."/>
            <person name="Sieker L.C."/>
            <person name="Jensen L.H."/>
        </authorList>
    </citation>
    <scope>X-RAY CRYSTALLOGRAPHY (3 ANGSTROMS)</scope>
</reference>
<reference key="6">
    <citation type="journal article" date="1989" name="J. Mol. Biol.">
        <title>Refinement of the 7 Fe ferredoxin from Azotobacter vinelandii at 1.9-A resolution.</title>
        <authorList>
            <person name="Stout G.H."/>
        </authorList>
    </citation>
    <scope>X-RAY CRYSTALLOGRAPHY (1.9 ANGSTROMS)</scope>
</reference>
<reference key="7">
    <citation type="journal article" date="1993" name="Acta Crystallogr. D">
        <title>Structure at pH 6.5 of ferredoxin I from Azotobacter vinelandii at 2.3-A resolution.</title>
        <authorList>
            <person name="Merritt E.A."/>
            <person name="Stout G.H."/>
            <person name="Turley S."/>
            <person name="Sieker L.C."/>
            <person name="Jensen L.H."/>
            <person name="Orme-Johnson W.H."/>
        </authorList>
    </citation>
    <scope>X-RAY CRYSTALLOGRAPHY (2.3 ANGSTROMS)</scope>
</reference>
<reference key="8">
    <citation type="journal article" date="1998" name="J. Mol. Biol.">
        <title>Structure of Azotobacter vinelandii 7Fe ferredoxin at 1.35-A resolution and determination of the [Fe-S] bonds with 0.01-A accuracy.</title>
        <authorList>
            <person name="Stout C.D."/>
            <person name="Stura E.A."/>
            <person name="McRee D.E."/>
        </authorList>
    </citation>
    <scope>X-RAY CRYSTALLOGRAPHY (1.35 ANGSTROMS)</scope>
</reference>
<reference key="9">
    <citation type="journal article" date="1999" name="Biochemistry">
        <title>Oxidized and reduced Azotobacter vinelandii ferredoxin I at 1.4-A resolution: conformational change of surface residues without significant change in the [3Fe-4S]+/0 cluster.</title>
        <authorList>
            <person name="Schipke C.G."/>
            <person name="Goodin D.B."/>
            <person name="McRee D.E."/>
            <person name="Stout C.D."/>
        </authorList>
    </citation>
    <scope>X-RAY CRYSTALLOGRAPHY (1.4 ANGSTROMS)</scope>
</reference>
<reference key="10">
    <citation type="journal article" date="1999" name="J. Biol. Chem.">
        <title>Alteration of the reduction potential of the [4Fe-4S](2+/+) cluster of Azotobacter vinelandii ferredoxin I.</title>
        <authorList>
            <person name="Chen K."/>
            <person name="Tilley G.J."/>
            <person name="Sridhar V."/>
            <person name="Prasad G.S."/>
            <person name="Stout C.D."/>
            <person name="Armstrong F.A."/>
            <person name="Burgess B.K."/>
        </authorList>
    </citation>
    <scope>X-RAY CRYSTALLOGRAPHY (2.8 ANGSTROMS)</scope>
</reference>
<reference key="11">
    <citation type="journal article" date="1991" name="FEBS Lett.">
        <title>Does ferredoxin I (Azotobacter) represent a novel class of DNA-binding proteins that regulate gene expression in response to cellular iron(II)?</title>
        <authorList>
            <person name="Thomson A.J."/>
        </authorList>
    </citation>
    <scope>DNA-BINDING</scope>
</reference>
<reference key="12">
    <citation type="journal article" date="1990" name="Proc. Natl. Acad. Sci. U.S.A.">
        <title>Site-directed mutagenesis of Azotobacter vinelandii ferredoxin I: [Fe-S] cluster-driven protein rearrangement.</title>
        <authorList>
            <person name="Martin A.E."/>
            <person name="Burgess B.K."/>
            <person name="Stout C.D."/>
            <person name="Cash V.L."/>
            <person name="Dean D.R."/>
            <person name="Jensen G.M."/>
            <person name="Stephens P.J."/>
        </authorList>
    </citation>
    <scope>MUTAGENESIS</scope>
</reference>
<reference key="13">
    <citation type="journal article" date="1991" name="J. Biol. Chem.">
        <title>Site-directed mutagenesis of Azotobacter vinelandii ferredoxin I. Changes in [4Fe-4S] cluster reduction potential and reactivity.</title>
        <authorList>
            <person name="Iismaa S.E."/>
            <person name="Vazquez A.E."/>
            <person name="Jensen G.M."/>
            <person name="Stephens P.J."/>
            <person name="Butt J.N."/>
            <person name="Armstrong F.A."/>
            <person name="Burgess B.K."/>
        </authorList>
    </citation>
    <scope>MUTAGENESIS</scope>
</reference>
<reference key="14">
    <citation type="journal article" date="1994" name="J. Biol. Chem.">
        <title>Azotobacter vinelandii ferredoxin I. Alteration of individual surface charges and the [4FE-4S]2+/+ cluster reduction potential.</title>
        <authorList>
            <person name="Shen B."/>
            <person name="Jollie D.R."/>
            <person name="Stout C.D."/>
            <person name="Diller T.C."/>
            <person name="Armstrong F.A."/>
            <person name="Gorst C.M."/>
            <person name="la Mar G.N."/>
            <person name="Stephen P.J."/>
            <person name="Burgess B.K."/>
        </authorList>
    </citation>
    <scope>MUTAGENESIS</scope>
</reference>
<feature type="initiator methionine" description="Removed" evidence="4">
    <location>
        <position position="1"/>
    </location>
</feature>
<feature type="chain" id="PRO_0000159095" description="Ferredoxin-1">
    <location>
        <begin position="2"/>
        <end position="107"/>
    </location>
</feature>
<feature type="domain" description="4Fe-4S ferredoxin-type 1" evidence="1">
    <location>
        <begin position="2"/>
        <end position="30"/>
    </location>
</feature>
<feature type="domain" description="4Fe-4S ferredoxin-type 2" evidence="1">
    <location>
        <begin position="31"/>
        <end position="60"/>
    </location>
</feature>
<feature type="region of interest" description="Disordered" evidence="2">
    <location>
        <begin position="84"/>
        <end position="107"/>
    </location>
</feature>
<feature type="compositionally biased region" description="Basic and acidic residues" evidence="2">
    <location>
        <begin position="96"/>
        <end position="107"/>
    </location>
</feature>
<feature type="binding site" evidence="3">
    <location>
        <position position="9"/>
    </location>
    <ligand>
        <name>[3Fe-4S] cluster</name>
        <dbReference type="ChEBI" id="CHEBI:21137"/>
    </ligand>
</feature>
<feature type="binding site" evidence="3">
    <location>
        <position position="17"/>
    </location>
    <ligand>
        <name>[3Fe-4S] cluster</name>
        <dbReference type="ChEBI" id="CHEBI:21137"/>
    </ligand>
</feature>
<feature type="binding site" evidence="3">
    <location>
        <position position="21"/>
    </location>
    <ligand>
        <name>[4Fe-4S] cluster</name>
        <dbReference type="ChEBI" id="CHEBI:49883"/>
    </ligand>
</feature>
<feature type="binding site" evidence="3">
    <location>
        <position position="40"/>
    </location>
    <ligand>
        <name>[4Fe-4S] cluster</name>
        <dbReference type="ChEBI" id="CHEBI:49883"/>
    </ligand>
</feature>
<feature type="binding site" evidence="3">
    <location>
        <position position="43"/>
    </location>
    <ligand>
        <name>[4Fe-4S] cluster</name>
        <dbReference type="ChEBI" id="CHEBI:49883"/>
    </ligand>
</feature>
<feature type="binding site" evidence="3">
    <location>
        <position position="46"/>
    </location>
    <ligand>
        <name>[4Fe-4S] cluster</name>
        <dbReference type="ChEBI" id="CHEBI:49883"/>
    </ligand>
</feature>
<feature type="binding site" evidence="3">
    <location>
        <position position="50"/>
    </location>
    <ligand>
        <name>[3Fe-4S] cluster</name>
        <dbReference type="ChEBI" id="CHEBI:21137"/>
    </ligand>
</feature>
<feature type="sequence conflict" description="In Ref. 2; AAA16869." evidence="5" ref="2">
    <original>E</original>
    <variation>R</variation>
    <location>
        <position position="49"/>
    </location>
</feature>
<feature type="sequence conflict" description="In Ref. 3; AA sequence." evidence="5" ref="3">
    <original>Q</original>
    <variation>E</variation>
    <location>
        <position position="53"/>
    </location>
</feature>
<feature type="strand" evidence="7">
    <location>
        <begin position="3"/>
        <end position="5"/>
    </location>
</feature>
<feature type="helix" evidence="7">
    <location>
        <begin position="7"/>
        <end position="9"/>
    </location>
</feature>
<feature type="turn" evidence="7">
    <location>
        <begin position="10"/>
        <end position="12"/>
    </location>
</feature>
<feature type="helix" evidence="7">
    <location>
        <begin position="16"/>
        <end position="20"/>
    </location>
</feature>
<feature type="strand" evidence="6">
    <location>
        <begin position="22"/>
        <end position="24"/>
    </location>
</feature>
<feature type="strand" evidence="7">
    <location>
        <begin position="26"/>
        <end position="28"/>
    </location>
</feature>
<feature type="strand" evidence="7">
    <location>
        <begin position="33"/>
        <end position="35"/>
    </location>
</feature>
<feature type="turn" evidence="7">
    <location>
        <begin position="37"/>
        <end position="39"/>
    </location>
</feature>
<feature type="helix" evidence="7">
    <location>
        <begin position="47"/>
        <end position="49"/>
    </location>
</feature>
<feature type="strand" evidence="7">
    <location>
        <begin position="55"/>
        <end position="57"/>
    </location>
</feature>
<feature type="helix" evidence="7">
    <location>
        <begin position="58"/>
        <end position="60"/>
    </location>
</feature>
<feature type="helix" evidence="7">
    <location>
        <begin position="63"/>
        <end position="66"/>
    </location>
</feature>
<feature type="helix" evidence="7">
    <location>
        <begin position="67"/>
        <end position="75"/>
    </location>
</feature>
<feature type="turn" evidence="7">
    <location>
        <begin position="76"/>
        <end position="78"/>
    </location>
</feature>
<feature type="helix" evidence="7">
    <location>
        <begin position="92"/>
        <end position="95"/>
    </location>
</feature>
<feature type="helix" evidence="7">
    <location>
        <begin position="101"/>
        <end position="104"/>
    </location>
</feature>
<evidence type="ECO:0000255" key="1">
    <source>
        <dbReference type="PROSITE-ProRule" id="PRU00711"/>
    </source>
</evidence>
<evidence type="ECO:0000256" key="2">
    <source>
        <dbReference type="SAM" id="MobiDB-lite"/>
    </source>
</evidence>
<evidence type="ECO:0000269" key="3">
    <source>
    </source>
</evidence>
<evidence type="ECO:0000269" key="4">
    <source>
    </source>
</evidence>
<evidence type="ECO:0000305" key="5"/>
<evidence type="ECO:0007829" key="6">
    <source>
        <dbReference type="PDB" id="1FD2"/>
    </source>
</evidence>
<evidence type="ECO:0007829" key="7">
    <source>
        <dbReference type="PDB" id="7FD1"/>
    </source>
</evidence>
<proteinExistence type="evidence at protein level"/>
<dbReference type="EMBL" id="J03521">
    <property type="protein sequence ID" value="AAA22125.1"/>
    <property type="molecule type" value="Genomic_DNA"/>
</dbReference>
<dbReference type="EMBL" id="M63007">
    <property type="protein sequence ID" value="AAA16869.1"/>
    <property type="molecule type" value="Unassigned_DNA"/>
</dbReference>
<dbReference type="PIR" id="A29936">
    <property type="entry name" value="FEAV"/>
</dbReference>
<dbReference type="RefSeq" id="WP_012702380.1">
    <property type="nucleotide sequence ID" value="NZ_FPKM01000003.1"/>
</dbReference>
<dbReference type="PDB" id="1A6L">
    <property type="method" value="X-ray"/>
    <property type="resolution" value="2.10 A"/>
    <property type="chains" value="A=2-107"/>
</dbReference>
<dbReference type="PDB" id="1AXQ">
    <property type="method" value="X-ray"/>
    <property type="resolution" value="2.10 A"/>
    <property type="chains" value="A=2-107"/>
</dbReference>
<dbReference type="PDB" id="1B0T">
    <property type="method" value="X-ray"/>
    <property type="resolution" value="2.10 A"/>
    <property type="chains" value="A=2-107"/>
</dbReference>
<dbReference type="PDB" id="1B0V">
    <property type="method" value="X-ray"/>
    <property type="resolution" value="2.80 A"/>
    <property type="chains" value="A/B/C/D=2-107"/>
</dbReference>
<dbReference type="PDB" id="1D3W">
    <property type="method" value="X-ray"/>
    <property type="resolution" value="1.70 A"/>
    <property type="chains" value="A=2-107"/>
</dbReference>
<dbReference type="PDB" id="1F5B">
    <property type="method" value="X-ray"/>
    <property type="resolution" value="1.62 A"/>
    <property type="chains" value="A=2-107"/>
</dbReference>
<dbReference type="PDB" id="1F5C">
    <property type="method" value="X-ray"/>
    <property type="resolution" value="1.75 A"/>
    <property type="chains" value="A=2-107"/>
</dbReference>
<dbReference type="PDB" id="1FD2">
    <property type="method" value="X-ray"/>
    <property type="resolution" value="1.90 A"/>
    <property type="chains" value="A=2-107"/>
</dbReference>
<dbReference type="PDB" id="1FDA">
    <property type="method" value="X-ray"/>
    <property type="resolution" value="2.10 A"/>
    <property type="chains" value="A=2-107"/>
</dbReference>
<dbReference type="PDB" id="1FDB">
    <property type="method" value="X-ray"/>
    <property type="resolution" value="2.20 A"/>
    <property type="chains" value="A=2-107"/>
</dbReference>
<dbReference type="PDB" id="1FDD">
    <property type="method" value="X-ray"/>
    <property type="resolution" value="1.90 A"/>
    <property type="chains" value="A=2-107"/>
</dbReference>
<dbReference type="PDB" id="1FER">
    <property type="method" value="X-ray"/>
    <property type="resolution" value="2.30 A"/>
    <property type="chains" value="A=2-107"/>
</dbReference>
<dbReference type="PDB" id="1FF2">
    <property type="method" value="X-ray"/>
    <property type="resolution" value="2.30 A"/>
    <property type="chains" value="A=2-107"/>
</dbReference>
<dbReference type="PDB" id="1FRH">
    <property type="method" value="X-ray"/>
    <property type="resolution" value="2.30 A"/>
    <property type="chains" value="A=2-107"/>
</dbReference>
<dbReference type="PDB" id="1FRI">
    <property type="method" value="X-ray"/>
    <property type="resolution" value="2.10 A"/>
    <property type="chains" value="A=2-107"/>
</dbReference>
<dbReference type="PDB" id="1FRJ">
    <property type="method" value="X-ray"/>
    <property type="resolution" value="2.30 A"/>
    <property type="chains" value="A=2-107"/>
</dbReference>
<dbReference type="PDB" id="1FRK">
    <property type="method" value="X-ray"/>
    <property type="resolution" value="2.10 A"/>
    <property type="chains" value="A=2-107"/>
</dbReference>
<dbReference type="PDB" id="1FRL">
    <property type="method" value="X-ray"/>
    <property type="resolution" value="2.30 A"/>
    <property type="chains" value="A=2-107"/>
</dbReference>
<dbReference type="PDB" id="1FRM">
    <property type="method" value="X-ray"/>
    <property type="resolution" value="2.30 A"/>
    <property type="chains" value="A=2-107"/>
</dbReference>
<dbReference type="PDB" id="1FRX">
    <property type="method" value="X-ray"/>
    <property type="resolution" value="2.50 A"/>
    <property type="chains" value="A=2-107"/>
</dbReference>
<dbReference type="PDB" id="1FTC">
    <property type="method" value="X-ray"/>
    <property type="resolution" value="2.35 A"/>
    <property type="chains" value="A/B=2-107"/>
</dbReference>
<dbReference type="PDB" id="1G3O">
    <property type="method" value="X-ray"/>
    <property type="resolution" value="1.65 A"/>
    <property type="chains" value="A=2-107"/>
</dbReference>
<dbReference type="PDB" id="1G6B">
    <property type="method" value="X-ray"/>
    <property type="resolution" value="1.90 A"/>
    <property type="chains" value="A=2-107"/>
</dbReference>
<dbReference type="PDB" id="1GAO">
    <property type="method" value="X-ray"/>
    <property type="resolution" value="2.20 A"/>
    <property type="chains" value="A/B/C/D=2-107"/>
</dbReference>
<dbReference type="PDB" id="1PC4">
    <property type="method" value="X-ray"/>
    <property type="resolution" value="1.65 A"/>
    <property type="chains" value="A=1-107"/>
</dbReference>
<dbReference type="PDB" id="1PC5">
    <property type="method" value="X-ray"/>
    <property type="resolution" value="1.80 A"/>
    <property type="chains" value="A=1-107"/>
</dbReference>
<dbReference type="PDB" id="2FD2">
    <property type="method" value="X-ray"/>
    <property type="resolution" value="1.90 A"/>
    <property type="chains" value="A=2-107"/>
</dbReference>
<dbReference type="PDB" id="5FD1">
    <property type="method" value="X-ray"/>
    <property type="resolution" value="1.90 A"/>
    <property type="chains" value="A=2-107"/>
</dbReference>
<dbReference type="PDB" id="6FD1">
    <property type="method" value="X-ray"/>
    <property type="resolution" value="1.35 A"/>
    <property type="chains" value="A=2-107"/>
</dbReference>
<dbReference type="PDB" id="6FDR">
    <property type="method" value="X-ray"/>
    <property type="resolution" value="1.40 A"/>
    <property type="chains" value="A=2-107"/>
</dbReference>
<dbReference type="PDB" id="7FD1">
    <property type="method" value="X-ray"/>
    <property type="resolution" value="1.30 A"/>
    <property type="chains" value="A=2-107"/>
</dbReference>
<dbReference type="PDB" id="7FDR">
    <property type="method" value="X-ray"/>
    <property type="resolution" value="1.40 A"/>
    <property type="chains" value="A=2-107"/>
</dbReference>
<dbReference type="PDBsum" id="1A6L"/>
<dbReference type="PDBsum" id="1AXQ"/>
<dbReference type="PDBsum" id="1B0T"/>
<dbReference type="PDBsum" id="1B0V"/>
<dbReference type="PDBsum" id="1D3W"/>
<dbReference type="PDBsum" id="1F5B"/>
<dbReference type="PDBsum" id="1F5C"/>
<dbReference type="PDBsum" id="1FD2"/>
<dbReference type="PDBsum" id="1FDA"/>
<dbReference type="PDBsum" id="1FDB"/>
<dbReference type="PDBsum" id="1FDD"/>
<dbReference type="PDBsum" id="1FER"/>
<dbReference type="PDBsum" id="1FF2"/>
<dbReference type="PDBsum" id="1FRH"/>
<dbReference type="PDBsum" id="1FRI"/>
<dbReference type="PDBsum" id="1FRJ"/>
<dbReference type="PDBsum" id="1FRK"/>
<dbReference type="PDBsum" id="1FRL"/>
<dbReference type="PDBsum" id="1FRM"/>
<dbReference type="PDBsum" id="1FRX"/>
<dbReference type="PDBsum" id="1FTC"/>
<dbReference type="PDBsum" id="1G3O"/>
<dbReference type="PDBsum" id="1G6B"/>
<dbReference type="PDBsum" id="1GAO"/>
<dbReference type="PDBsum" id="1PC4"/>
<dbReference type="PDBsum" id="1PC5"/>
<dbReference type="PDBsum" id="2FD2"/>
<dbReference type="PDBsum" id="5FD1"/>
<dbReference type="PDBsum" id="6FD1"/>
<dbReference type="PDBsum" id="6FDR"/>
<dbReference type="PDBsum" id="7FD1"/>
<dbReference type="PDBsum" id="7FDR"/>
<dbReference type="SMR" id="P00214"/>
<dbReference type="GeneID" id="88186825"/>
<dbReference type="OMA" id="DRMLYIH"/>
<dbReference type="EvolutionaryTrace" id="P00214"/>
<dbReference type="GO" id="GO:0051538">
    <property type="term" value="F:3 iron, 4 sulfur cluster binding"/>
    <property type="evidence" value="ECO:0007669"/>
    <property type="project" value="UniProtKB-KW"/>
</dbReference>
<dbReference type="GO" id="GO:0051539">
    <property type="term" value="F:4 iron, 4 sulfur cluster binding"/>
    <property type="evidence" value="ECO:0007669"/>
    <property type="project" value="UniProtKB-KW"/>
</dbReference>
<dbReference type="GO" id="GO:0003677">
    <property type="term" value="F:DNA binding"/>
    <property type="evidence" value="ECO:0007669"/>
    <property type="project" value="UniProtKB-KW"/>
</dbReference>
<dbReference type="GO" id="GO:0009055">
    <property type="term" value="F:electron transfer activity"/>
    <property type="evidence" value="ECO:0007669"/>
    <property type="project" value="InterPro"/>
</dbReference>
<dbReference type="GO" id="GO:0046872">
    <property type="term" value="F:metal ion binding"/>
    <property type="evidence" value="ECO:0007669"/>
    <property type="project" value="UniProtKB-KW"/>
</dbReference>
<dbReference type="Gene3D" id="3.30.70.20">
    <property type="match status" value="1"/>
</dbReference>
<dbReference type="InterPro" id="IPR017896">
    <property type="entry name" value="4Fe4S_Fe-S-bd"/>
</dbReference>
<dbReference type="InterPro" id="IPR017900">
    <property type="entry name" value="4Fe4S_Fe_S_CS"/>
</dbReference>
<dbReference type="InterPro" id="IPR000813">
    <property type="entry name" value="7Fe_ferredoxin"/>
</dbReference>
<dbReference type="InterPro" id="IPR022569">
    <property type="entry name" value="Fd_C"/>
</dbReference>
<dbReference type="InterPro" id="IPR054829">
    <property type="entry name" value="FdxA"/>
</dbReference>
<dbReference type="InterPro" id="IPR050294">
    <property type="entry name" value="RnfB_subfamily"/>
</dbReference>
<dbReference type="NCBIfam" id="NF045490">
    <property type="entry name" value="FdxA_Protbact"/>
    <property type="match status" value="1"/>
</dbReference>
<dbReference type="PANTHER" id="PTHR42859:SF2">
    <property type="entry name" value="FERREDOXIN"/>
    <property type="match status" value="1"/>
</dbReference>
<dbReference type="PANTHER" id="PTHR42859">
    <property type="entry name" value="OXIDOREDUCTASE"/>
    <property type="match status" value="1"/>
</dbReference>
<dbReference type="Pfam" id="PF11953">
    <property type="entry name" value="DUF3470"/>
    <property type="match status" value="1"/>
</dbReference>
<dbReference type="Pfam" id="PF00037">
    <property type="entry name" value="Fer4"/>
    <property type="match status" value="1"/>
</dbReference>
<dbReference type="PRINTS" id="PR00354">
    <property type="entry name" value="7FE8SFRDOXIN"/>
</dbReference>
<dbReference type="SUPFAM" id="SSF54862">
    <property type="entry name" value="4Fe-4S ferredoxins"/>
    <property type="match status" value="1"/>
</dbReference>
<dbReference type="PROSITE" id="PS00198">
    <property type="entry name" value="4FE4S_FER_1"/>
    <property type="match status" value="1"/>
</dbReference>
<dbReference type="PROSITE" id="PS51379">
    <property type="entry name" value="4FE4S_FER_2"/>
    <property type="match status" value="2"/>
</dbReference>
<protein>
    <recommendedName>
        <fullName>Ferredoxin-1</fullName>
    </recommendedName>
    <alternativeName>
        <fullName>Ferredoxin I</fullName>
        <shortName>FdI</shortName>
    </alternativeName>
</protein>
<organism>
    <name type="scientific">Azotobacter vinelandii</name>
    <dbReference type="NCBI Taxonomy" id="354"/>
    <lineage>
        <taxon>Bacteria</taxon>
        <taxon>Pseudomonadati</taxon>
        <taxon>Pseudomonadota</taxon>
        <taxon>Gammaproteobacteria</taxon>
        <taxon>Pseudomonadales</taxon>
        <taxon>Pseudomonadaceae</taxon>
        <taxon>Azotobacter</taxon>
    </lineage>
</organism>
<comment type="function">
    <text>Ferredoxins are iron-sulfur proteins that transfer electrons in a wide variety of metabolic reactions. This ferredoxin could play a role in regulating gene expression by interacting directly with DNA.</text>
</comment>
<comment type="cofactor">
    <cofactor>
        <name>[4Fe-4S] cluster</name>
        <dbReference type="ChEBI" id="CHEBI:49883"/>
    </cofactor>
    <text>Binds 1 [4Fe-4S] cluster.</text>
</comment>
<comment type="cofactor">
    <cofactor>
        <name>[3Fe-4S] cluster</name>
        <dbReference type="ChEBI" id="CHEBI:21137"/>
    </cofactor>
    <text>Binds 1 [3Fe-4S] cluster.</text>
</comment>
<comment type="biophysicochemical properties">
    <redoxPotential>
        <text>E(0) is -450 mV for the 3Fe-4S, and -645 mV for the 4Fe-4S clusters.</text>
    </redoxPotential>
</comment>
<sequence>MAFVVTDNCIKCKYTDCVEVCPVDCFYEGPNFLVIHPDECIDCALCEPECPAQAIFSEDEVPEDMQEFIQLNAELAEVWPNITEKKDPLPDAEDWDGVKGKLQHLER</sequence>
<gene>
    <name type="primary">fdxA</name>
</gene>
<accession>P00214</accession>
<name>FER1_AZOVI</name>